<organism>
    <name type="scientific">Bacillus cereus (strain Q1)</name>
    <dbReference type="NCBI Taxonomy" id="361100"/>
    <lineage>
        <taxon>Bacteria</taxon>
        <taxon>Bacillati</taxon>
        <taxon>Bacillota</taxon>
        <taxon>Bacilli</taxon>
        <taxon>Bacillales</taxon>
        <taxon>Bacillaceae</taxon>
        <taxon>Bacillus</taxon>
        <taxon>Bacillus cereus group</taxon>
    </lineage>
</organism>
<sequence length="295" mass="31833">MTNVTGTERVKRGMAEMQKGGVIMDVINAEQAKIAEEAGAVAVMALERVPADIRAAGGVSRMADPTIVEEVMGAVSIPVMAKCRIGHLVEARVLESLGVDYIDESEVLTPADEVYHLNKRDYTVPFVCGCRDIGEAARRIAEGASMLRTKGEPGTGNIVEAVRHMRQVNAEIRQVASLREDELMTYAKNTGAPYEVLREIKRLGRLPVVNFAAGGVATPADAALMMQLGADGVFVGSGIFKSENPAKFARAIVEATTHYEDYELIASLSKGLGNAMKGIEISTLLPEQRMQERGW</sequence>
<comment type="function">
    <text evidence="1">Catalyzes the formation of pyridoxal 5'-phosphate from ribose 5-phosphate (RBP), glyceraldehyde 3-phosphate (G3P) and ammonia. The ammonia is provided by the PdxT subunit. Can also use ribulose 5-phosphate and dihydroxyacetone phosphate as substrates, resulting from enzyme-catalyzed isomerization of RBP and G3P, respectively.</text>
</comment>
<comment type="catalytic activity">
    <reaction evidence="1">
        <text>aldehydo-D-ribose 5-phosphate + D-glyceraldehyde 3-phosphate + L-glutamine = pyridoxal 5'-phosphate + L-glutamate + phosphate + 3 H2O + H(+)</text>
        <dbReference type="Rhea" id="RHEA:31507"/>
        <dbReference type="ChEBI" id="CHEBI:15377"/>
        <dbReference type="ChEBI" id="CHEBI:15378"/>
        <dbReference type="ChEBI" id="CHEBI:29985"/>
        <dbReference type="ChEBI" id="CHEBI:43474"/>
        <dbReference type="ChEBI" id="CHEBI:58273"/>
        <dbReference type="ChEBI" id="CHEBI:58359"/>
        <dbReference type="ChEBI" id="CHEBI:59776"/>
        <dbReference type="ChEBI" id="CHEBI:597326"/>
        <dbReference type="EC" id="4.3.3.6"/>
    </reaction>
</comment>
<comment type="pathway">
    <text evidence="1">Cofactor biosynthesis; pyridoxal 5'-phosphate biosynthesis.</text>
</comment>
<comment type="subunit">
    <text evidence="1">In the presence of PdxT, forms a dodecamer of heterodimers.</text>
</comment>
<comment type="similarity">
    <text evidence="1">Belongs to the PdxS/SNZ family.</text>
</comment>
<reference key="1">
    <citation type="journal article" date="2009" name="J. Bacteriol.">
        <title>Complete genome sequence of the extremophilic Bacillus cereus strain Q1 with industrial applications.</title>
        <authorList>
            <person name="Xiong Z."/>
            <person name="Jiang Y."/>
            <person name="Qi D."/>
            <person name="Lu H."/>
            <person name="Yang F."/>
            <person name="Yang J."/>
            <person name="Chen L."/>
            <person name="Sun L."/>
            <person name="Xu X."/>
            <person name="Xue Y."/>
            <person name="Zhu Y."/>
            <person name="Jin Q."/>
        </authorList>
    </citation>
    <scope>NUCLEOTIDE SEQUENCE [LARGE SCALE GENOMIC DNA]</scope>
    <source>
        <strain>Q1</strain>
    </source>
</reference>
<gene>
    <name evidence="1" type="primary">pdxS</name>
    <name type="ordered locus">BCQ_0016</name>
</gene>
<feature type="chain" id="PRO_1000188211" description="Pyridoxal 5'-phosphate synthase subunit PdxS">
    <location>
        <begin position="1"/>
        <end position="295"/>
    </location>
</feature>
<feature type="active site" description="Schiff-base intermediate with D-ribose 5-phosphate" evidence="1">
    <location>
        <position position="82"/>
    </location>
</feature>
<feature type="binding site" evidence="1">
    <location>
        <position position="25"/>
    </location>
    <ligand>
        <name>D-ribose 5-phosphate</name>
        <dbReference type="ChEBI" id="CHEBI:78346"/>
    </ligand>
</feature>
<feature type="binding site" evidence="1">
    <location>
        <position position="154"/>
    </location>
    <ligand>
        <name>D-ribose 5-phosphate</name>
        <dbReference type="ChEBI" id="CHEBI:78346"/>
    </ligand>
</feature>
<feature type="binding site" evidence="1">
    <location>
        <position position="166"/>
    </location>
    <ligand>
        <name>D-glyceraldehyde 3-phosphate</name>
        <dbReference type="ChEBI" id="CHEBI:59776"/>
    </ligand>
</feature>
<feature type="binding site" evidence="1">
    <location>
        <position position="215"/>
    </location>
    <ligand>
        <name>D-ribose 5-phosphate</name>
        <dbReference type="ChEBI" id="CHEBI:78346"/>
    </ligand>
</feature>
<feature type="binding site" evidence="1">
    <location>
        <begin position="236"/>
        <end position="237"/>
    </location>
    <ligand>
        <name>D-ribose 5-phosphate</name>
        <dbReference type="ChEBI" id="CHEBI:78346"/>
    </ligand>
</feature>
<keyword id="KW-0456">Lyase</keyword>
<keyword id="KW-0663">Pyridoxal phosphate</keyword>
<keyword id="KW-0704">Schiff base</keyword>
<accession>B9IYH8</accession>
<protein>
    <recommendedName>
        <fullName evidence="1">Pyridoxal 5'-phosphate synthase subunit PdxS</fullName>
        <shortName evidence="1">PLP synthase subunit PdxS</shortName>
        <ecNumber evidence="1">4.3.3.6</ecNumber>
    </recommendedName>
    <alternativeName>
        <fullName evidence="1">Pdx1</fullName>
    </alternativeName>
</protein>
<proteinExistence type="inferred from homology"/>
<name>PDXS_BACCQ</name>
<evidence type="ECO:0000255" key="1">
    <source>
        <dbReference type="HAMAP-Rule" id="MF_01824"/>
    </source>
</evidence>
<dbReference type="EC" id="4.3.3.6" evidence="1"/>
<dbReference type="EMBL" id="CP000227">
    <property type="protein sequence ID" value="ACM10540.1"/>
    <property type="molecule type" value="Genomic_DNA"/>
</dbReference>
<dbReference type="SMR" id="B9IYH8"/>
<dbReference type="KEGG" id="bcq:BCQ_0016"/>
<dbReference type="HOGENOM" id="CLU_055352_1_0_9"/>
<dbReference type="UniPathway" id="UPA00245"/>
<dbReference type="Proteomes" id="UP000000441">
    <property type="component" value="Chromosome"/>
</dbReference>
<dbReference type="GO" id="GO:0036381">
    <property type="term" value="F:pyridoxal 5'-phosphate synthase (glutamine hydrolysing) activity"/>
    <property type="evidence" value="ECO:0007669"/>
    <property type="project" value="UniProtKB-UniRule"/>
</dbReference>
<dbReference type="GO" id="GO:0006520">
    <property type="term" value="P:amino acid metabolic process"/>
    <property type="evidence" value="ECO:0007669"/>
    <property type="project" value="TreeGrafter"/>
</dbReference>
<dbReference type="GO" id="GO:0042823">
    <property type="term" value="P:pyridoxal phosphate biosynthetic process"/>
    <property type="evidence" value="ECO:0007669"/>
    <property type="project" value="UniProtKB-UniRule"/>
</dbReference>
<dbReference type="GO" id="GO:0008615">
    <property type="term" value="P:pyridoxine biosynthetic process"/>
    <property type="evidence" value="ECO:0007669"/>
    <property type="project" value="TreeGrafter"/>
</dbReference>
<dbReference type="CDD" id="cd04727">
    <property type="entry name" value="pdxS"/>
    <property type="match status" value="1"/>
</dbReference>
<dbReference type="FunFam" id="3.20.20.70:FF:000001">
    <property type="entry name" value="Pyridoxine biosynthesis protein PDX1"/>
    <property type="match status" value="1"/>
</dbReference>
<dbReference type="Gene3D" id="3.20.20.70">
    <property type="entry name" value="Aldolase class I"/>
    <property type="match status" value="1"/>
</dbReference>
<dbReference type="HAMAP" id="MF_01824">
    <property type="entry name" value="PdxS"/>
    <property type="match status" value="1"/>
</dbReference>
<dbReference type="InterPro" id="IPR013785">
    <property type="entry name" value="Aldolase_TIM"/>
</dbReference>
<dbReference type="InterPro" id="IPR001852">
    <property type="entry name" value="PdxS/SNZ"/>
</dbReference>
<dbReference type="InterPro" id="IPR033755">
    <property type="entry name" value="PdxS/SNZ_N"/>
</dbReference>
<dbReference type="InterPro" id="IPR011060">
    <property type="entry name" value="RibuloseP-bd_barrel"/>
</dbReference>
<dbReference type="NCBIfam" id="NF003215">
    <property type="entry name" value="PRK04180.1"/>
    <property type="match status" value="1"/>
</dbReference>
<dbReference type="NCBIfam" id="TIGR00343">
    <property type="entry name" value="pyridoxal 5'-phosphate synthase lyase subunit PdxS"/>
    <property type="match status" value="1"/>
</dbReference>
<dbReference type="PANTHER" id="PTHR31829">
    <property type="entry name" value="PYRIDOXAL 5'-PHOSPHATE SYNTHASE SUBUNIT SNZ1-RELATED"/>
    <property type="match status" value="1"/>
</dbReference>
<dbReference type="PANTHER" id="PTHR31829:SF0">
    <property type="entry name" value="PYRIDOXAL 5'-PHOSPHATE SYNTHASE SUBUNIT SNZ1-RELATED"/>
    <property type="match status" value="1"/>
</dbReference>
<dbReference type="Pfam" id="PF01680">
    <property type="entry name" value="SOR_SNZ"/>
    <property type="match status" value="1"/>
</dbReference>
<dbReference type="PIRSF" id="PIRSF029271">
    <property type="entry name" value="Pdx1"/>
    <property type="match status" value="1"/>
</dbReference>
<dbReference type="SUPFAM" id="SSF51366">
    <property type="entry name" value="Ribulose-phoshate binding barrel"/>
    <property type="match status" value="1"/>
</dbReference>
<dbReference type="PROSITE" id="PS01235">
    <property type="entry name" value="PDXS_SNZ_1"/>
    <property type="match status" value="1"/>
</dbReference>
<dbReference type="PROSITE" id="PS51129">
    <property type="entry name" value="PDXS_SNZ_2"/>
    <property type="match status" value="1"/>
</dbReference>